<dbReference type="EMBL" id="M94151">
    <property type="protein sequence ID" value="AAA58407.2"/>
    <property type="molecule type" value="mRNA"/>
</dbReference>
<dbReference type="EMBL" id="AK127226">
    <property type="protein sequence ID" value="BAG54457.1"/>
    <property type="molecule type" value="mRNA"/>
</dbReference>
<dbReference type="EMBL" id="AK295181">
    <property type="protein sequence ID" value="BAH12003.1"/>
    <property type="molecule type" value="mRNA"/>
</dbReference>
<dbReference type="EMBL" id="AK295493">
    <property type="protein sequence ID" value="BAH12088.1"/>
    <property type="molecule type" value="mRNA"/>
</dbReference>
<dbReference type="EMBL" id="AK303035">
    <property type="protein sequence ID" value="BAH13884.1"/>
    <property type="molecule type" value="mRNA"/>
</dbReference>
<dbReference type="EMBL" id="BX537769">
    <property type="protein sequence ID" value="CAD97832.1"/>
    <property type="molecule type" value="mRNA"/>
</dbReference>
<dbReference type="EMBL" id="AC008067">
    <property type="protein sequence ID" value="AAY15073.1"/>
    <property type="molecule type" value="Genomic_DNA"/>
</dbReference>
<dbReference type="EMBL" id="AC010975">
    <property type="status" value="NOT_ANNOTATED_CDS"/>
    <property type="molecule type" value="Genomic_DNA"/>
</dbReference>
<dbReference type="EMBL" id="AC011741">
    <property type="protein sequence ID" value="AAX93241.1"/>
    <property type="molecule type" value="Genomic_DNA"/>
</dbReference>
<dbReference type="EMBL" id="AC011746">
    <property type="protein sequence ID" value="AAY15008.1"/>
    <property type="molecule type" value="Genomic_DNA"/>
</dbReference>
<dbReference type="EMBL" id="AC016670">
    <property type="status" value="NOT_ANNOTATED_CDS"/>
    <property type="molecule type" value="Genomic_DNA"/>
</dbReference>
<dbReference type="EMBL" id="AC016716">
    <property type="status" value="NOT_ANNOTATED_CDS"/>
    <property type="molecule type" value="Genomic_DNA"/>
</dbReference>
<dbReference type="EMBL" id="AC093322">
    <property type="status" value="NOT_ANNOTATED_CDS"/>
    <property type="molecule type" value="Genomic_DNA"/>
</dbReference>
<dbReference type="EMBL" id="AC096573">
    <property type="protein sequence ID" value="AAY14758.1"/>
    <property type="molecule type" value="Genomic_DNA"/>
</dbReference>
<dbReference type="EMBL" id="AC096753">
    <property type="protein sequence ID" value="AAY14763.1"/>
    <property type="molecule type" value="Genomic_DNA"/>
</dbReference>
<dbReference type="EMBL" id="AC104780">
    <property type="protein sequence ID" value="AAX88946.1"/>
    <property type="molecule type" value="Genomic_DNA"/>
</dbReference>
<dbReference type="EMBL" id="FJ695201">
    <property type="status" value="NOT_ANNOTATED_CDS"/>
    <property type="molecule type" value="Genomic_DNA"/>
</dbReference>
<dbReference type="EMBL" id="CH471053">
    <property type="protein sequence ID" value="EAW99564.1"/>
    <property type="molecule type" value="Genomic_DNA"/>
</dbReference>
<dbReference type="EMBL" id="CH471053">
    <property type="protein sequence ID" value="EAW99565.1"/>
    <property type="molecule type" value="Genomic_DNA"/>
</dbReference>
<dbReference type="EMBL" id="BC052996">
    <property type="protein sequence ID" value="AAH52996.1"/>
    <property type="molecule type" value="mRNA"/>
</dbReference>
<dbReference type="CCDS" id="CCDS42703.2">
    <molecule id="P26232-2"/>
</dbReference>
<dbReference type="CCDS" id="CCDS54371.1">
    <molecule id="P26232-3"/>
</dbReference>
<dbReference type="CCDS" id="CCDS62944.1">
    <molecule id="P26232-1"/>
</dbReference>
<dbReference type="CCDS" id="CCDS62945.1">
    <molecule id="P26232-6"/>
</dbReference>
<dbReference type="CCDS" id="CCDS74531.1">
    <molecule id="P26232-4"/>
</dbReference>
<dbReference type="PIR" id="A45011">
    <property type="entry name" value="A45011"/>
</dbReference>
<dbReference type="RefSeq" id="NP_001158355.1">
    <molecule id="P26232-3"/>
    <property type="nucleotide sequence ID" value="NM_001164883.2"/>
</dbReference>
<dbReference type="RefSeq" id="NP_001269526.1">
    <molecule id="P26232-1"/>
    <property type="nucleotide sequence ID" value="NM_001282597.3"/>
</dbReference>
<dbReference type="RefSeq" id="NP_001269527.1">
    <molecule id="P26232-5"/>
    <property type="nucleotide sequence ID" value="NM_001282598.2"/>
</dbReference>
<dbReference type="RefSeq" id="NP_001269528.1">
    <molecule id="P26232-6"/>
    <property type="nucleotide sequence ID" value="NM_001282599.2"/>
</dbReference>
<dbReference type="RefSeq" id="NP_001269529.1">
    <molecule id="P26232-4"/>
    <property type="nucleotide sequence ID" value="NM_001282600.2"/>
</dbReference>
<dbReference type="RefSeq" id="NP_001307739.1">
    <property type="nucleotide sequence ID" value="NM_001320810.1"/>
</dbReference>
<dbReference type="RefSeq" id="NP_001386666.1">
    <molecule id="P26232-2"/>
    <property type="nucleotide sequence ID" value="NM_001399737.1"/>
</dbReference>
<dbReference type="RefSeq" id="NP_004380.2">
    <molecule id="P26232-2"/>
    <property type="nucleotide sequence ID" value="NM_004389.4"/>
</dbReference>
<dbReference type="RefSeq" id="XP_011530857.1">
    <property type="nucleotide sequence ID" value="XM_011532555.2"/>
</dbReference>
<dbReference type="RefSeq" id="XP_011530858.1">
    <molecule id="P26232-1"/>
    <property type="nucleotide sequence ID" value="XM_011532556.3"/>
</dbReference>
<dbReference type="RefSeq" id="XP_016858892.1">
    <molecule id="P26232-2"/>
    <property type="nucleotide sequence ID" value="XM_017003403.3"/>
</dbReference>
<dbReference type="RefSeq" id="XP_024308482.1">
    <molecule id="P26232-1"/>
    <property type="nucleotide sequence ID" value="XM_024452714.2"/>
</dbReference>
<dbReference type="RefSeq" id="XP_024308483.1">
    <molecule id="P26232-1"/>
    <property type="nucleotide sequence ID" value="XM_024452715.2"/>
</dbReference>
<dbReference type="RefSeq" id="XP_054196616.1">
    <molecule id="P26232-1"/>
    <property type="nucleotide sequence ID" value="XM_054340641.1"/>
</dbReference>
<dbReference type="RefSeq" id="XP_054196617.1">
    <molecule id="P26232-1"/>
    <property type="nucleotide sequence ID" value="XM_054340642.1"/>
</dbReference>
<dbReference type="RefSeq" id="XP_054196618.1">
    <molecule id="P26232-1"/>
    <property type="nucleotide sequence ID" value="XM_054340643.1"/>
</dbReference>
<dbReference type="RefSeq" id="XP_054196619.1">
    <molecule id="P26232-2"/>
    <property type="nucleotide sequence ID" value="XM_054340644.1"/>
</dbReference>
<dbReference type="PDB" id="6DUW">
    <property type="method" value="X-ray"/>
    <property type="resolution" value="2.20 A"/>
    <property type="chains" value="A=651-953"/>
</dbReference>
<dbReference type="PDBsum" id="6DUW"/>
<dbReference type="EMDB" id="EMD-27717"/>
<dbReference type="SMR" id="P26232"/>
<dbReference type="BioGRID" id="107877">
    <property type="interactions" value="84"/>
</dbReference>
<dbReference type="DIP" id="DIP-60979N"/>
<dbReference type="FunCoup" id="P26232">
    <property type="interactions" value="1258"/>
</dbReference>
<dbReference type="IntAct" id="P26232">
    <property type="interactions" value="49"/>
</dbReference>
<dbReference type="MINT" id="P26232"/>
<dbReference type="STRING" id="9606.ENSP00000384638"/>
<dbReference type="GlyGen" id="P26232">
    <property type="glycosylation" value="1 site, 1 O-linked glycan (1 site)"/>
</dbReference>
<dbReference type="iPTMnet" id="P26232"/>
<dbReference type="PhosphoSitePlus" id="P26232"/>
<dbReference type="SwissPalm" id="P26232"/>
<dbReference type="BioMuta" id="CTNNA2"/>
<dbReference type="DMDM" id="114152793"/>
<dbReference type="CPTAC" id="CPTAC-1756"/>
<dbReference type="jPOST" id="P26232"/>
<dbReference type="MassIVE" id="P26232"/>
<dbReference type="PaxDb" id="9606-ENSP00000384638"/>
<dbReference type="PeptideAtlas" id="P26232"/>
<dbReference type="ProteomicsDB" id="54314">
    <molecule id="P26232-1"/>
</dbReference>
<dbReference type="ProteomicsDB" id="54315">
    <molecule id="P26232-2"/>
</dbReference>
<dbReference type="ProteomicsDB" id="54316">
    <molecule id="P26232-3"/>
</dbReference>
<dbReference type="ProteomicsDB" id="54317">
    <molecule id="P26232-4"/>
</dbReference>
<dbReference type="ProteomicsDB" id="54318">
    <molecule id="P26232-5"/>
</dbReference>
<dbReference type="ProteomicsDB" id="54319">
    <molecule id="P26232-6"/>
</dbReference>
<dbReference type="Pumba" id="P26232"/>
<dbReference type="TopDownProteomics" id="P26232-6">
    <molecule id="P26232-6"/>
</dbReference>
<dbReference type="Antibodypedia" id="8335">
    <property type="antibodies" value="143 antibodies from 28 providers"/>
</dbReference>
<dbReference type="DNASU" id="1496"/>
<dbReference type="Ensembl" id="ENST00000343114.7">
    <molecule id="P26232-6"/>
    <property type="protein sequence ID" value="ENSP00000341500.3"/>
    <property type="gene ID" value="ENSG00000066032.19"/>
</dbReference>
<dbReference type="Ensembl" id="ENST00000402739.9">
    <molecule id="P26232-1"/>
    <property type="protein sequence ID" value="ENSP00000384638.4"/>
    <property type="gene ID" value="ENSG00000066032.19"/>
</dbReference>
<dbReference type="Ensembl" id="ENST00000466387.5">
    <molecule id="P26232-2"/>
    <property type="protein sequence ID" value="ENSP00000418191.1"/>
    <property type="gene ID" value="ENSG00000066032.19"/>
</dbReference>
<dbReference type="Ensembl" id="ENST00000496558.5">
    <molecule id="P26232-2"/>
    <property type="protein sequence ID" value="ENSP00000419295.1"/>
    <property type="gene ID" value="ENSG00000066032.19"/>
</dbReference>
<dbReference type="Ensembl" id="ENST00000541047.5">
    <molecule id="P26232-4"/>
    <property type="protein sequence ID" value="ENSP00000444675.2"/>
    <property type="gene ID" value="ENSG00000066032.19"/>
</dbReference>
<dbReference type="Ensembl" id="ENST00000629316.2">
    <molecule id="P26232-3"/>
    <property type="protein sequence ID" value="ENSP00000486160.1"/>
    <property type="gene ID" value="ENSG00000066032.19"/>
</dbReference>
<dbReference type="GeneID" id="1496"/>
<dbReference type="KEGG" id="hsa:1496"/>
<dbReference type="MANE-Select" id="ENST00000402739.9">
    <property type="protein sequence ID" value="ENSP00000384638.4"/>
    <property type="RefSeq nucleotide sequence ID" value="NM_001282597.3"/>
    <property type="RefSeq protein sequence ID" value="NP_001269526.1"/>
</dbReference>
<dbReference type="UCSC" id="uc010yse.3">
    <molecule id="P26232-1"/>
    <property type="organism name" value="human"/>
</dbReference>
<dbReference type="AGR" id="HGNC:2510"/>
<dbReference type="CTD" id="1496"/>
<dbReference type="DisGeNET" id="1496"/>
<dbReference type="GeneCards" id="CTNNA2"/>
<dbReference type="HGNC" id="HGNC:2510">
    <property type="gene designation" value="CTNNA2"/>
</dbReference>
<dbReference type="HPA" id="ENSG00000066032">
    <property type="expression patterns" value="Group enriched (brain, epididymis, retina)"/>
</dbReference>
<dbReference type="MalaCards" id="CTNNA2"/>
<dbReference type="MIM" id="114025">
    <property type="type" value="gene"/>
</dbReference>
<dbReference type="MIM" id="618174">
    <property type="type" value="phenotype"/>
</dbReference>
<dbReference type="neXtProt" id="NX_P26232"/>
<dbReference type="OpenTargets" id="ENSG00000066032"/>
<dbReference type="PharmGKB" id="PA27013"/>
<dbReference type="VEuPathDB" id="HostDB:ENSG00000066032"/>
<dbReference type="eggNOG" id="KOG3681">
    <property type="taxonomic scope" value="Eukaryota"/>
</dbReference>
<dbReference type="GeneTree" id="ENSGT01030000234543"/>
<dbReference type="HOGENOM" id="CLU_015314_2_0_1"/>
<dbReference type="InParanoid" id="P26232"/>
<dbReference type="OMA" id="MNNMRQF"/>
<dbReference type="OrthoDB" id="6376697at2759"/>
<dbReference type="PAN-GO" id="P26232">
    <property type="GO annotations" value="6 GO annotations based on evolutionary models"/>
</dbReference>
<dbReference type="PhylomeDB" id="P26232"/>
<dbReference type="TreeFam" id="TF313686"/>
<dbReference type="PathwayCommons" id="P26232"/>
<dbReference type="Reactome" id="R-HSA-525793">
    <property type="pathway name" value="Myogenesis"/>
</dbReference>
<dbReference type="SignaLink" id="P26232"/>
<dbReference type="SIGNOR" id="P26232"/>
<dbReference type="BioGRID-ORCS" id="1496">
    <property type="hits" value="15 hits in 1149 CRISPR screens"/>
</dbReference>
<dbReference type="CD-CODE" id="DEE660B4">
    <property type="entry name" value="Stress granule"/>
</dbReference>
<dbReference type="CD-CODE" id="FB4E32DD">
    <property type="entry name" value="Presynaptic clusters and postsynaptic densities"/>
</dbReference>
<dbReference type="ChiTaRS" id="CTNNA2">
    <property type="organism name" value="human"/>
</dbReference>
<dbReference type="GenomeRNAi" id="1496"/>
<dbReference type="Pharos" id="P26232">
    <property type="development level" value="Tbio"/>
</dbReference>
<dbReference type="PRO" id="PR:P26232"/>
<dbReference type="Proteomes" id="UP000005640">
    <property type="component" value="Chromosome 2"/>
</dbReference>
<dbReference type="RNAct" id="P26232">
    <property type="molecule type" value="protein"/>
</dbReference>
<dbReference type="Bgee" id="ENSG00000066032">
    <property type="expression patterns" value="Expressed in frontal pole and 150 other cell types or tissues"/>
</dbReference>
<dbReference type="ExpressionAtlas" id="P26232">
    <property type="expression patterns" value="baseline and differential"/>
</dbReference>
<dbReference type="GO" id="GO:0015629">
    <property type="term" value="C:actin cytoskeleton"/>
    <property type="evidence" value="ECO:0007669"/>
    <property type="project" value="InterPro"/>
</dbReference>
<dbReference type="GO" id="GO:0005912">
    <property type="term" value="C:adherens junction"/>
    <property type="evidence" value="ECO:0000250"/>
    <property type="project" value="UniProtKB"/>
</dbReference>
<dbReference type="GO" id="GO:0030424">
    <property type="term" value="C:axon"/>
    <property type="evidence" value="ECO:0000250"/>
    <property type="project" value="UniProtKB"/>
</dbReference>
<dbReference type="GO" id="GO:0016323">
    <property type="term" value="C:basolateral plasma membrane"/>
    <property type="evidence" value="ECO:0007669"/>
    <property type="project" value="Ensembl"/>
</dbReference>
<dbReference type="GO" id="GO:0016342">
    <property type="term" value="C:catenin complex"/>
    <property type="evidence" value="ECO:0000318"/>
    <property type="project" value="GO_Central"/>
</dbReference>
<dbReference type="GO" id="GO:0005737">
    <property type="term" value="C:cytoplasm"/>
    <property type="evidence" value="ECO:0000314"/>
    <property type="project" value="UniProtKB"/>
</dbReference>
<dbReference type="GO" id="GO:0005829">
    <property type="term" value="C:cytosol"/>
    <property type="evidence" value="ECO:0000304"/>
    <property type="project" value="Reactome"/>
</dbReference>
<dbReference type="GO" id="GO:0098890">
    <property type="term" value="C:extrinsic component of postsynaptic membrane"/>
    <property type="evidence" value="ECO:0007669"/>
    <property type="project" value="Ensembl"/>
</dbReference>
<dbReference type="GO" id="GO:0098888">
    <property type="term" value="C:extrinsic component of presynaptic membrane"/>
    <property type="evidence" value="ECO:0007669"/>
    <property type="project" value="Ensembl"/>
</dbReference>
<dbReference type="GO" id="GO:0098686">
    <property type="term" value="C:hippocampal mossy fiber to CA3 synapse"/>
    <property type="evidence" value="ECO:0007669"/>
    <property type="project" value="Ensembl"/>
</dbReference>
<dbReference type="GO" id="GO:0030027">
    <property type="term" value="C:lamellipodium"/>
    <property type="evidence" value="ECO:0007669"/>
    <property type="project" value="Ensembl"/>
</dbReference>
<dbReference type="GO" id="GO:0005634">
    <property type="term" value="C:nucleus"/>
    <property type="evidence" value="ECO:0007669"/>
    <property type="project" value="UniProtKB-SubCell"/>
</dbReference>
<dbReference type="GO" id="GO:0098688">
    <property type="term" value="C:parallel fiber to Purkinje cell synapse"/>
    <property type="evidence" value="ECO:0007669"/>
    <property type="project" value="Ensembl"/>
</dbReference>
<dbReference type="GO" id="GO:0099092">
    <property type="term" value="C:postsynaptic density, intracellular component"/>
    <property type="evidence" value="ECO:0007669"/>
    <property type="project" value="Ensembl"/>
</dbReference>
<dbReference type="GO" id="GO:0098831">
    <property type="term" value="C:presynaptic active zone cytoplasmic component"/>
    <property type="evidence" value="ECO:0007669"/>
    <property type="project" value="Ensembl"/>
</dbReference>
<dbReference type="GO" id="GO:0051015">
    <property type="term" value="F:actin filament binding"/>
    <property type="evidence" value="ECO:0000314"/>
    <property type="project" value="UniProtKB"/>
</dbReference>
<dbReference type="GO" id="GO:0008013">
    <property type="term" value="F:beta-catenin binding"/>
    <property type="evidence" value="ECO:0000318"/>
    <property type="project" value="GO_Central"/>
</dbReference>
<dbReference type="GO" id="GO:0045296">
    <property type="term" value="F:cadherin binding"/>
    <property type="evidence" value="ECO:0007005"/>
    <property type="project" value="BHF-UCL"/>
</dbReference>
<dbReference type="GO" id="GO:0042802">
    <property type="term" value="F:identical protein binding"/>
    <property type="evidence" value="ECO:0007669"/>
    <property type="project" value="Ensembl"/>
</dbReference>
<dbReference type="GO" id="GO:0005200">
    <property type="term" value="F:structural constituent of cytoskeleton"/>
    <property type="evidence" value="ECO:0000303"/>
    <property type="project" value="UniProtKB"/>
</dbReference>
<dbReference type="GO" id="GO:0007409">
    <property type="term" value="P:axonogenesis"/>
    <property type="evidence" value="ECO:0000250"/>
    <property type="project" value="UniProtKB"/>
</dbReference>
<dbReference type="GO" id="GO:0048854">
    <property type="term" value="P:brain morphogenesis"/>
    <property type="evidence" value="ECO:0000250"/>
    <property type="project" value="UniProtKB"/>
</dbReference>
<dbReference type="GO" id="GO:0016477">
    <property type="term" value="P:cell migration"/>
    <property type="evidence" value="ECO:0000318"/>
    <property type="project" value="GO_Central"/>
</dbReference>
<dbReference type="GO" id="GO:0098609">
    <property type="term" value="P:cell-cell adhesion"/>
    <property type="evidence" value="ECO:0000250"/>
    <property type="project" value="UniProtKB"/>
</dbReference>
<dbReference type="GO" id="GO:0048813">
    <property type="term" value="P:dendrite morphogenesis"/>
    <property type="evidence" value="ECO:0000250"/>
    <property type="project" value="UniProtKB"/>
</dbReference>
<dbReference type="GO" id="GO:0098885">
    <property type="term" value="P:modification of postsynaptic actin cytoskeleton"/>
    <property type="evidence" value="ECO:0007669"/>
    <property type="project" value="Ensembl"/>
</dbReference>
<dbReference type="GO" id="GO:0034316">
    <property type="term" value="P:negative regulation of Arp2/3 complex-mediated actin nucleation"/>
    <property type="evidence" value="ECO:0000315"/>
    <property type="project" value="UniProtKB"/>
</dbReference>
<dbReference type="GO" id="GO:0060134">
    <property type="term" value="P:prepulse inhibition"/>
    <property type="evidence" value="ECO:0000250"/>
    <property type="project" value="UniProtKB"/>
</dbReference>
<dbReference type="GO" id="GO:0021942">
    <property type="term" value="P:radial glia guided migration of Purkinje cell"/>
    <property type="evidence" value="ECO:0000250"/>
    <property type="project" value="UniProtKB"/>
</dbReference>
<dbReference type="GO" id="GO:2001222">
    <property type="term" value="P:regulation of neuron migration"/>
    <property type="evidence" value="ECO:0000315"/>
    <property type="project" value="UniProtKB"/>
</dbReference>
<dbReference type="GO" id="GO:0010975">
    <property type="term" value="P:regulation of neuron projection development"/>
    <property type="evidence" value="ECO:0000315"/>
    <property type="project" value="UniProtKB"/>
</dbReference>
<dbReference type="GO" id="GO:0051823">
    <property type="term" value="P:regulation of synapse structural plasticity"/>
    <property type="evidence" value="ECO:0000250"/>
    <property type="project" value="UniProtKB"/>
</dbReference>
<dbReference type="FunFam" id="1.20.120.230:FF:000006">
    <property type="entry name" value="Catenin alpha 1"/>
    <property type="match status" value="1"/>
</dbReference>
<dbReference type="FunFam" id="1.20.120.230:FF:000007">
    <property type="entry name" value="Catenin alpha 1"/>
    <property type="match status" value="1"/>
</dbReference>
<dbReference type="FunFam" id="1.20.120.230:FF:000008">
    <property type="entry name" value="Catenin alpha 1"/>
    <property type="match status" value="1"/>
</dbReference>
<dbReference type="FunFam" id="1.20.120.230:FF:000011">
    <property type="entry name" value="Catenin alpha 1"/>
    <property type="match status" value="1"/>
</dbReference>
<dbReference type="Gene3D" id="6.10.250.2510">
    <property type="match status" value="1"/>
</dbReference>
<dbReference type="Gene3D" id="1.20.120.230">
    <property type="entry name" value="Alpha-catenin/vinculin-like"/>
    <property type="match status" value="5"/>
</dbReference>
<dbReference type="InterPro" id="IPR036723">
    <property type="entry name" value="Alpha-catenin/vinculin-like_sf"/>
</dbReference>
<dbReference type="InterPro" id="IPR001033">
    <property type="entry name" value="Alpha_catenin"/>
</dbReference>
<dbReference type="InterPro" id="IPR006077">
    <property type="entry name" value="Vinculin/catenin"/>
</dbReference>
<dbReference type="InterPro" id="IPR000633">
    <property type="entry name" value="Vinculin_CS"/>
</dbReference>
<dbReference type="PANTHER" id="PTHR18914">
    <property type="entry name" value="ALPHA CATENIN"/>
    <property type="match status" value="1"/>
</dbReference>
<dbReference type="PANTHER" id="PTHR18914:SF23">
    <property type="entry name" value="CATENIN ALPHA-2"/>
    <property type="match status" value="1"/>
</dbReference>
<dbReference type="Pfam" id="PF01044">
    <property type="entry name" value="Vinculin"/>
    <property type="match status" value="2"/>
</dbReference>
<dbReference type="PRINTS" id="PR00805">
    <property type="entry name" value="ALPHACATENIN"/>
</dbReference>
<dbReference type="SUPFAM" id="SSF47220">
    <property type="entry name" value="alpha-catenin/vinculin-like"/>
    <property type="match status" value="4"/>
</dbReference>
<dbReference type="PROSITE" id="PS00663">
    <property type="entry name" value="VINCULIN_1"/>
    <property type="match status" value="1"/>
</dbReference>
<sequence length="953" mass="105313">MTSATSPIILKWDPKSLEIRTLTVERLLEPLVTQVTTLVNTSNKGPSGKKKGRSKKAHVLAASVEQATQNFLEKGEQIAKESQDLKEELVAAVEDVRKQGETMRIASSEFADDPCSSVKRGTMVRAARALLSAVTRLLILADMADVMRLLSHLKIVEEALEAVKNATNEQDLANRFKEFGKEMVKLNYVAARRQQELKDPHCRDEMAAARGALKKNATMLYTASQAFLRHPDVAATRANRDYVFKQVQEAIAGISNAAQATSPTDEAKGHTGIGELAAALNEFDNKIILDPMTFSEARFRPSLEERLESIISGAALMADSSCTRDDRRERIVAECNAVRQALQDLLSEYMNNTGRKEKGDPLNIAIDKMTKKTRDLRRQLRKAVMDHISDSFLETNVPLLVLIEAAKSGNEKEVKEYAQVFREHANKLVEVANLACSISNNEEGVKLVRMAATQIDSLCPQVINAALTLAARPQSKVAQDNMDVFKDQWEKQVRVLTEAVDDITSVDDFLSVSENHILEDVNKCVIALQEGDVDTLDRTAGAIRGRAARVIHIINAEMENYEAGVYTEKVLEATKLLSETVMPRFAEQVEVAIEALSANVPQPFEENEFIDASRLVYDGVRDIRKAVLMIRTPEELEDDSDFEQEDYDVRSRTSVQTEDDQLIAGQSARAIMAQLPQEEKAKIAEQVEIFHQEKSKLDAEVAKWDDSGNDIIVLAKQMCMIMMEMTDFTRGKGPLKNTSDVINAAKKIAEAGSRMDKLARAVADQCPDSACKQDLLAYLQRIALYCHQLNICSKVKAEVQNLGGELIVSGTGVQSTFTTFYEVDCDVIDGGRASQLSTHLPTCAEGAPIGSGSSDSSMLDSATSLIQAAKNLMNAVVLTVKASYVASTKYQKVYGTAAVNSPVVSWKMKAPEKKPLVKREKPEEFQTRVRRGSQKKHISPVQALSEFKAMDSF</sequence>
<organism>
    <name type="scientific">Homo sapiens</name>
    <name type="common">Human</name>
    <dbReference type="NCBI Taxonomy" id="9606"/>
    <lineage>
        <taxon>Eukaryota</taxon>
        <taxon>Metazoa</taxon>
        <taxon>Chordata</taxon>
        <taxon>Craniata</taxon>
        <taxon>Vertebrata</taxon>
        <taxon>Euteleostomi</taxon>
        <taxon>Mammalia</taxon>
        <taxon>Eutheria</taxon>
        <taxon>Euarchontoglires</taxon>
        <taxon>Primates</taxon>
        <taxon>Haplorrhini</taxon>
        <taxon>Catarrhini</taxon>
        <taxon>Hominidae</taxon>
        <taxon>Homo</taxon>
    </lineage>
</organism>
<protein>
    <recommendedName>
        <fullName>Catenin alpha-2</fullName>
    </recommendedName>
    <alternativeName>
        <fullName>Alpha N-catenin</fullName>
    </alternativeName>
    <alternativeName>
        <fullName>Alpha-catenin-related protein</fullName>
    </alternativeName>
</protein>
<accession>P26232</accession>
<accession>B3KXE5</accession>
<accession>B7Z2W7</accession>
<accession>B7Z352</accession>
<accession>B7Z898</accession>
<accession>Q4ZFW1</accession>
<accession>Q53R26</accession>
<accession>Q53R33</accession>
<accession>Q53T67</accession>
<accession>Q53T71</accession>
<accession>Q53TM8</accession>
<accession>Q7Z3L1</accession>
<accession>Q7Z3Y0</accession>
<comment type="function">
    <text evidence="2 5">May function as a linker between cadherin adhesion receptors and the cytoskeleton to regulate cell-cell adhesion and differentiation in the nervous system (By similarity). Required for proper regulation of cortical neuronal migration and neurite growth (PubMed:30013181). It acts as a negative regulator of Arp2/3 complex activity and Arp2/3-mediated actin polymerization (PubMed:30013181). It thereby suppresses excessive actin branching which would impair neurite growth and stability (PubMed:30013181). Regulates morphological plasticity of synapses and cerebellar and hippocampal lamination during development. Functions in the control of startle modulation (By similarity).</text>
</comment>
<comment type="subunit">
    <text evidence="1 4 5">Interacts with CDH1 and CDH2 (By similarity). Interacts with ZNF639; recruits CTNNA2 to the nucleus (PubMed:16182284). Interacts with F-actin (PubMed:30013181).</text>
</comment>
<comment type="interaction">
    <interactant intactId="EBI-3953920">
        <id>P26232</id>
    </interactant>
    <interactant intactId="EBI-491549">
        <id>P35222</id>
        <label>CTNNB1</label>
    </interactant>
    <organismsDiffer>false</organismsDiffer>
    <experiments>5</experiments>
</comment>
<comment type="interaction">
    <interactant intactId="EBI-3953920">
        <id>P26232</id>
    </interactant>
    <interactant intactId="EBI-947476">
        <id>Q9UID6</id>
        <label>ZNF639</label>
    </interactant>
    <organismsDiffer>false</organismsDiffer>
    <experiments>7</experiments>
</comment>
<comment type="subcellular location">
    <subcellularLocation>
        <location evidence="2">Cell membrane</location>
        <topology evidence="2">Peripheral membrane protein</topology>
        <orientation evidence="2">Cytoplasmic side</orientation>
    </subcellularLocation>
    <subcellularLocation>
        <location evidence="4">Cytoplasm</location>
    </subcellularLocation>
    <subcellularLocation>
        <location evidence="2">Cytoplasm</location>
        <location evidence="2">Cytoskeleton</location>
    </subcellularLocation>
    <subcellularLocation>
        <location evidence="2">Cell junction</location>
        <location evidence="2">Adherens junction</location>
    </subcellularLocation>
    <subcellularLocation>
        <location evidence="2">Cell projection</location>
        <location evidence="2">Axon</location>
    </subcellularLocation>
    <subcellularLocation>
        <location evidence="4">Nucleus</location>
    </subcellularLocation>
</comment>
<comment type="alternative products">
    <event type="alternative splicing"/>
    <isoform>
        <id>P26232-1</id>
        <name>1</name>
        <name>AlphaN-catenin II</name>
        <sequence type="displayed"/>
    </isoform>
    <isoform>
        <id>P26232-2</id>
        <name>2</name>
        <name>AlphaN-catenin I</name>
        <sequence type="described" ref="VSP_020337"/>
    </isoform>
    <isoform>
        <id>P26232-3</id>
        <name>3</name>
        <sequence type="described" ref="VSP_038009"/>
    </isoform>
    <isoform>
        <id>P26232-4</id>
        <name>4</name>
        <sequence type="described" ref="VSP_038008 VSP_020337"/>
    </isoform>
    <isoform>
        <id>P26232-5</id>
        <name>5</name>
        <sequence type="described" ref="VSP_038007 VSP_020337"/>
    </isoform>
    <isoform>
        <id>P26232-6</id>
        <name>6</name>
        <name>AlphaN-catenin III</name>
        <sequence type="described" ref="VSP_038005 VSP_038006 VSP_020337"/>
    </isoform>
</comment>
<comment type="tissue specificity">
    <text evidence="5">Expressed in neural tissues, with strongest expression in fetal and adult brain. Expressed in the developing cortical plate and marginal zone of 20-week-old human fetal brain.</text>
</comment>
<comment type="disease" evidence="5">
    <disease id="DI-05375">
        <name>Cortical dysplasia, complex, with other brain malformations 9</name>
        <acronym>CDCBM9</acronym>
        <description>An autosomal recessive disorder characterized by neurodevelopmental delay apparent from early infancy, acquired microcephaly, hypotonic cerebral palsy, inability to ambulate or speak, and intractable seizures. Brain imaging shows pachygyria with severe cortical gray matter thickening, paucity of gyri without an obvious posterior-anterior gradient or focal dysplasias, hypogenesis of the corpus callosum, and cerebellar hypoplasia.</description>
        <dbReference type="MIM" id="618174"/>
    </disease>
    <text>The disease is caused by variants affecting the gene represented in this entry.</text>
</comment>
<comment type="similarity">
    <text evidence="9">Belongs to the vinculin/alpha-catenin family.</text>
</comment>
<evidence type="ECO:0000250" key="1">
    <source>
        <dbReference type="UniProtKB" id="P30997"/>
    </source>
</evidence>
<evidence type="ECO:0000250" key="2">
    <source>
        <dbReference type="UniProtKB" id="Q61301"/>
    </source>
</evidence>
<evidence type="ECO:0000256" key="3">
    <source>
        <dbReference type="SAM" id="MobiDB-lite"/>
    </source>
</evidence>
<evidence type="ECO:0000269" key="4">
    <source>
    </source>
</evidence>
<evidence type="ECO:0000269" key="5">
    <source>
    </source>
</evidence>
<evidence type="ECO:0000303" key="6">
    <source>
    </source>
</evidence>
<evidence type="ECO:0000303" key="7">
    <source>
    </source>
</evidence>
<evidence type="ECO:0000303" key="8">
    <source>
    </source>
</evidence>
<evidence type="ECO:0000305" key="9"/>
<evidence type="ECO:0007744" key="10">
    <source>
    </source>
</evidence>
<evidence type="ECO:0007829" key="11">
    <source>
        <dbReference type="PDB" id="6DUW"/>
    </source>
</evidence>
<reference key="1">
    <citation type="journal article" date="1993" name="Genomics">
        <title>Characterization and chromosomal assignment of a human cDNA encoding a protein related to the murine 102-kDa cadherin-associated protein (alpha-catenin).</title>
        <authorList>
            <person name="Claverie J.-M."/>
            <person name="Hardelin J.-P."/>
            <person name="Legouis R."/>
            <person name="Levilliers J."/>
            <person name="Bougueleret L."/>
            <person name="Mattei M.-G."/>
            <person name="Petit C."/>
        </authorList>
    </citation>
    <scope>NUCLEOTIDE SEQUENCE [MRNA] (ISOFORM 1)</scope>
    <source>
        <tissue>Brain</tissue>
    </source>
</reference>
<reference key="2">
    <citation type="submission" date="2000-02" db="EMBL/GenBank/DDBJ databases">
        <authorList>
            <person name="Hardelin J.-P."/>
        </authorList>
    </citation>
    <scope>SEQUENCE REVISION TO C-TERMINUS</scope>
</reference>
<reference key="3">
    <citation type="journal article" date="2004" name="Nat. Genet.">
        <title>Complete sequencing and characterization of 21,243 full-length human cDNAs.</title>
        <authorList>
            <person name="Ota T."/>
            <person name="Suzuki Y."/>
            <person name="Nishikawa T."/>
            <person name="Otsuki T."/>
            <person name="Sugiyama T."/>
            <person name="Irie R."/>
            <person name="Wakamatsu A."/>
            <person name="Hayashi K."/>
            <person name="Sato H."/>
            <person name="Nagai K."/>
            <person name="Kimura K."/>
            <person name="Makita H."/>
            <person name="Sekine M."/>
            <person name="Obayashi M."/>
            <person name="Nishi T."/>
            <person name="Shibahara T."/>
            <person name="Tanaka T."/>
            <person name="Ishii S."/>
            <person name="Yamamoto J."/>
            <person name="Saito K."/>
            <person name="Kawai Y."/>
            <person name="Isono Y."/>
            <person name="Nakamura Y."/>
            <person name="Nagahari K."/>
            <person name="Murakami K."/>
            <person name="Yasuda T."/>
            <person name="Iwayanagi T."/>
            <person name="Wagatsuma M."/>
            <person name="Shiratori A."/>
            <person name="Sudo H."/>
            <person name="Hosoiri T."/>
            <person name="Kaku Y."/>
            <person name="Kodaira H."/>
            <person name="Kondo H."/>
            <person name="Sugawara M."/>
            <person name="Takahashi M."/>
            <person name="Kanda K."/>
            <person name="Yokoi T."/>
            <person name="Furuya T."/>
            <person name="Kikkawa E."/>
            <person name="Omura Y."/>
            <person name="Abe K."/>
            <person name="Kamihara K."/>
            <person name="Katsuta N."/>
            <person name="Sato K."/>
            <person name="Tanikawa M."/>
            <person name="Yamazaki M."/>
            <person name="Ninomiya K."/>
            <person name="Ishibashi T."/>
            <person name="Yamashita H."/>
            <person name="Murakawa K."/>
            <person name="Fujimori K."/>
            <person name="Tanai H."/>
            <person name="Kimata M."/>
            <person name="Watanabe M."/>
            <person name="Hiraoka S."/>
            <person name="Chiba Y."/>
            <person name="Ishida S."/>
            <person name="Ono Y."/>
            <person name="Takiguchi S."/>
            <person name="Watanabe S."/>
            <person name="Yosida M."/>
            <person name="Hotuta T."/>
            <person name="Kusano J."/>
            <person name="Kanehori K."/>
            <person name="Takahashi-Fujii A."/>
            <person name="Hara H."/>
            <person name="Tanase T.-O."/>
            <person name="Nomura Y."/>
            <person name="Togiya S."/>
            <person name="Komai F."/>
            <person name="Hara R."/>
            <person name="Takeuchi K."/>
            <person name="Arita M."/>
            <person name="Imose N."/>
            <person name="Musashino K."/>
            <person name="Yuuki H."/>
            <person name="Oshima A."/>
            <person name="Sasaki N."/>
            <person name="Aotsuka S."/>
            <person name="Yoshikawa Y."/>
            <person name="Matsunawa H."/>
            <person name="Ichihara T."/>
            <person name="Shiohata N."/>
            <person name="Sano S."/>
            <person name="Moriya S."/>
            <person name="Momiyama H."/>
            <person name="Satoh N."/>
            <person name="Takami S."/>
            <person name="Terashima Y."/>
            <person name="Suzuki O."/>
            <person name="Nakagawa S."/>
            <person name="Senoh A."/>
            <person name="Mizoguchi H."/>
            <person name="Goto Y."/>
            <person name="Shimizu F."/>
            <person name="Wakebe H."/>
            <person name="Hishigaki H."/>
            <person name="Watanabe T."/>
            <person name="Sugiyama A."/>
            <person name="Takemoto M."/>
            <person name="Kawakami B."/>
            <person name="Yamazaki M."/>
            <person name="Watanabe K."/>
            <person name="Kumagai A."/>
            <person name="Itakura S."/>
            <person name="Fukuzumi Y."/>
            <person name="Fujimori Y."/>
            <person name="Komiyama M."/>
            <person name="Tashiro H."/>
            <person name="Tanigami A."/>
            <person name="Fujiwara T."/>
            <person name="Ono T."/>
            <person name="Yamada K."/>
            <person name="Fujii Y."/>
            <person name="Ozaki K."/>
            <person name="Hirao M."/>
            <person name="Ohmori Y."/>
            <person name="Kawabata A."/>
            <person name="Hikiji T."/>
            <person name="Kobatake N."/>
            <person name="Inagaki H."/>
            <person name="Ikema Y."/>
            <person name="Okamoto S."/>
            <person name="Okitani R."/>
            <person name="Kawakami T."/>
            <person name="Noguchi S."/>
            <person name="Itoh T."/>
            <person name="Shigeta K."/>
            <person name="Senba T."/>
            <person name="Matsumura K."/>
            <person name="Nakajima Y."/>
            <person name="Mizuno T."/>
            <person name="Morinaga M."/>
            <person name="Sasaki M."/>
            <person name="Togashi T."/>
            <person name="Oyama M."/>
            <person name="Hata H."/>
            <person name="Watanabe M."/>
            <person name="Komatsu T."/>
            <person name="Mizushima-Sugano J."/>
            <person name="Satoh T."/>
            <person name="Shirai Y."/>
            <person name="Takahashi Y."/>
            <person name="Nakagawa K."/>
            <person name="Okumura K."/>
            <person name="Nagase T."/>
            <person name="Nomura N."/>
            <person name="Kikuchi H."/>
            <person name="Masuho Y."/>
            <person name="Yamashita R."/>
            <person name="Nakai K."/>
            <person name="Yada T."/>
            <person name="Nakamura Y."/>
            <person name="Ohara O."/>
            <person name="Isogai T."/>
            <person name="Sugano S."/>
        </authorList>
    </citation>
    <scope>NUCLEOTIDE SEQUENCE [LARGE SCALE MRNA] (ISOFORMS 2; 3; 4 AND 5)</scope>
    <source>
        <tissue>Brain</tissue>
        <tissue>Hippocampus</tissue>
        <tissue>Testis</tissue>
    </source>
</reference>
<reference key="4">
    <citation type="journal article" date="2007" name="BMC Genomics">
        <title>The full-ORF clone resource of the German cDNA consortium.</title>
        <authorList>
            <person name="Bechtel S."/>
            <person name="Rosenfelder H."/>
            <person name="Duda A."/>
            <person name="Schmidt C.P."/>
            <person name="Ernst U."/>
            <person name="Wellenreuther R."/>
            <person name="Mehrle A."/>
            <person name="Schuster C."/>
            <person name="Bahr A."/>
            <person name="Bloecker H."/>
            <person name="Heubner D."/>
            <person name="Hoerlein A."/>
            <person name="Michel G."/>
            <person name="Wedler H."/>
            <person name="Koehrer K."/>
            <person name="Ottenwaelder B."/>
            <person name="Poustka A."/>
            <person name="Wiemann S."/>
            <person name="Schupp I."/>
        </authorList>
    </citation>
    <scope>NUCLEOTIDE SEQUENCE [LARGE SCALE MRNA] (ISOFORM 6)</scope>
    <source>
        <tissue>Hippocampus</tissue>
    </source>
</reference>
<reference key="5">
    <citation type="journal article" date="2005" name="Nature">
        <title>Generation and annotation of the DNA sequences of human chromosomes 2 and 4.</title>
        <authorList>
            <person name="Hillier L.W."/>
            <person name="Graves T.A."/>
            <person name="Fulton R.S."/>
            <person name="Fulton L.A."/>
            <person name="Pepin K.H."/>
            <person name="Minx P."/>
            <person name="Wagner-McPherson C."/>
            <person name="Layman D."/>
            <person name="Wylie K."/>
            <person name="Sekhon M."/>
            <person name="Becker M.C."/>
            <person name="Fewell G.A."/>
            <person name="Delehaunty K.D."/>
            <person name="Miner T.L."/>
            <person name="Nash W.E."/>
            <person name="Kremitzki C."/>
            <person name="Oddy L."/>
            <person name="Du H."/>
            <person name="Sun H."/>
            <person name="Bradshaw-Cordum H."/>
            <person name="Ali J."/>
            <person name="Carter J."/>
            <person name="Cordes M."/>
            <person name="Harris A."/>
            <person name="Isak A."/>
            <person name="van Brunt A."/>
            <person name="Nguyen C."/>
            <person name="Du F."/>
            <person name="Courtney L."/>
            <person name="Kalicki J."/>
            <person name="Ozersky P."/>
            <person name="Abbott S."/>
            <person name="Armstrong J."/>
            <person name="Belter E.A."/>
            <person name="Caruso L."/>
            <person name="Cedroni M."/>
            <person name="Cotton M."/>
            <person name="Davidson T."/>
            <person name="Desai A."/>
            <person name="Elliott G."/>
            <person name="Erb T."/>
            <person name="Fronick C."/>
            <person name="Gaige T."/>
            <person name="Haakenson W."/>
            <person name="Haglund K."/>
            <person name="Holmes A."/>
            <person name="Harkins R."/>
            <person name="Kim K."/>
            <person name="Kruchowski S.S."/>
            <person name="Strong C.M."/>
            <person name="Grewal N."/>
            <person name="Goyea E."/>
            <person name="Hou S."/>
            <person name="Levy A."/>
            <person name="Martinka S."/>
            <person name="Mead K."/>
            <person name="McLellan M.D."/>
            <person name="Meyer R."/>
            <person name="Randall-Maher J."/>
            <person name="Tomlinson C."/>
            <person name="Dauphin-Kohlberg S."/>
            <person name="Kozlowicz-Reilly A."/>
            <person name="Shah N."/>
            <person name="Swearengen-Shahid S."/>
            <person name="Snider J."/>
            <person name="Strong J.T."/>
            <person name="Thompson J."/>
            <person name="Yoakum M."/>
            <person name="Leonard S."/>
            <person name="Pearman C."/>
            <person name="Trani L."/>
            <person name="Radionenko M."/>
            <person name="Waligorski J.E."/>
            <person name="Wang C."/>
            <person name="Rock S.M."/>
            <person name="Tin-Wollam A.-M."/>
            <person name="Maupin R."/>
            <person name="Latreille P."/>
            <person name="Wendl M.C."/>
            <person name="Yang S.-P."/>
            <person name="Pohl C."/>
            <person name="Wallis J.W."/>
            <person name="Spieth J."/>
            <person name="Bieri T.A."/>
            <person name="Berkowicz N."/>
            <person name="Nelson J.O."/>
            <person name="Osborne J."/>
            <person name="Ding L."/>
            <person name="Meyer R."/>
            <person name="Sabo A."/>
            <person name="Shotland Y."/>
            <person name="Sinha P."/>
            <person name="Wohldmann P.E."/>
            <person name="Cook L.L."/>
            <person name="Hickenbotham M.T."/>
            <person name="Eldred J."/>
            <person name="Williams D."/>
            <person name="Jones T.A."/>
            <person name="She X."/>
            <person name="Ciccarelli F.D."/>
            <person name="Izaurralde E."/>
            <person name="Taylor J."/>
            <person name="Schmutz J."/>
            <person name="Myers R.M."/>
            <person name="Cox D.R."/>
            <person name="Huang X."/>
            <person name="McPherson J.D."/>
            <person name="Mardis E.R."/>
            <person name="Clifton S.W."/>
            <person name="Warren W.C."/>
            <person name="Chinwalla A.T."/>
            <person name="Eddy S.R."/>
            <person name="Marra M.A."/>
            <person name="Ovcharenko I."/>
            <person name="Furey T.S."/>
            <person name="Miller W."/>
            <person name="Eichler E.E."/>
            <person name="Bork P."/>
            <person name="Suyama M."/>
            <person name="Torrents D."/>
            <person name="Waterston R.H."/>
            <person name="Wilson R.K."/>
        </authorList>
    </citation>
    <scope>NUCLEOTIDE SEQUENCE [LARGE SCALE GENOMIC DNA]</scope>
</reference>
<reference key="6">
    <citation type="submission" date="2005-09" db="EMBL/GenBank/DDBJ databases">
        <authorList>
            <person name="Mural R.J."/>
            <person name="Istrail S."/>
            <person name="Sutton G.G."/>
            <person name="Florea L."/>
            <person name="Halpern A.L."/>
            <person name="Mobarry C.M."/>
            <person name="Lippert R."/>
            <person name="Walenz B."/>
            <person name="Shatkay H."/>
            <person name="Dew I."/>
            <person name="Miller J.R."/>
            <person name="Flanigan M.J."/>
            <person name="Edwards N.J."/>
            <person name="Bolanos R."/>
            <person name="Fasulo D."/>
            <person name="Halldorsson B.V."/>
            <person name="Hannenhalli S."/>
            <person name="Turner R."/>
            <person name="Yooseph S."/>
            <person name="Lu F."/>
            <person name="Nusskern D.R."/>
            <person name="Shue B.C."/>
            <person name="Zheng X.H."/>
            <person name="Zhong F."/>
            <person name="Delcher A.L."/>
            <person name="Huson D.H."/>
            <person name="Kravitz S.A."/>
            <person name="Mouchard L."/>
            <person name="Reinert K."/>
            <person name="Remington K.A."/>
            <person name="Clark A.G."/>
            <person name="Waterman M.S."/>
            <person name="Eichler E.E."/>
            <person name="Adams M.D."/>
            <person name="Hunkapiller M.W."/>
            <person name="Myers E.W."/>
            <person name="Venter J.C."/>
        </authorList>
    </citation>
    <scope>NUCLEOTIDE SEQUENCE [LARGE SCALE GENOMIC DNA]</scope>
</reference>
<reference key="7">
    <citation type="journal article" date="2004" name="Genome Res.">
        <title>The status, quality, and expansion of the NIH full-length cDNA project: the Mammalian Gene Collection (MGC).</title>
        <authorList>
            <consortium name="The MGC Project Team"/>
        </authorList>
    </citation>
    <scope>NUCLEOTIDE SEQUENCE [LARGE SCALE MRNA] (ISOFORM 2)</scope>
    <source>
        <tissue>PNS</tissue>
    </source>
</reference>
<reference key="8">
    <citation type="journal article" date="2005" name="Exp. Cell Res.">
        <title>Nuclear translocation of alphaN-catenin by the novel zinc finger transcriptional repressor ZASC1.</title>
        <authorList>
            <person name="Bogaerts S."/>
            <person name="Vanlandschoot A."/>
            <person name="van Hengel J."/>
            <person name="van Roy F."/>
        </authorList>
    </citation>
    <scope>INTERACTION WITH ZNF639</scope>
    <scope>SUBCELLULAR LOCATION</scope>
</reference>
<reference key="9">
    <citation type="journal article" date="2008" name="Am. J. Med. Genet. B Neuropsychiatr. Genet.">
        <title>Regulation of a novel alphaN-catenin splice variant in schizophrenic smokers.</title>
        <authorList>
            <person name="Mexal S."/>
            <person name="Berger R."/>
            <person name="Pearce L."/>
            <person name="Barton A."/>
            <person name="Logel J."/>
            <person name="Adams C.E."/>
            <person name="Ross R.G."/>
            <person name="Freedman R."/>
            <person name="Leonard S."/>
        </authorList>
    </citation>
    <scope>ALTERNATIVE SPLICING (ISOFORM 6)</scope>
</reference>
<reference key="10">
    <citation type="journal article" date="2011" name="Sci. Signal.">
        <title>System-wide temporal characterization of the proteome and phosphoproteome of human embryonic stem cell differentiation.</title>
        <authorList>
            <person name="Rigbolt K.T."/>
            <person name="Prokhorova T.A."/>
            <person name="Akimov V."/>
            <person name="Henningsen J."/>
            <person name="Johansen P.T."/>
            <person name="Kratchmarova I."/>
            <person name="Kassem M."/>
            <person name="Mann M."/>
            <person name="Olsen J.V."/>
            <person name="Blagoev B."/>
        </authorList>
    </citation>
    <scope>PHOSPHORYLATION [LARGE SCALE ANALYSIS] AT SER-640</scope>
    <scope>IDENTIFICATION BY MASS SPECTROMETRY [LARGE SCALE ANALYSIS]</scope>
</reference>
<reference key="11">
    <citation type="journal article" date="2018" name="Nat. Genet.">
        <title>Biallelic loss of human CTNNA2, encoding alphaN-catenin, leads to ARP2/3 complex overactivity and disordered cortical neuronal migration.</title>
        <authorList>
            <person name="Schaffer A.E."/>
            <person name="Breuss M.W."/>
            <person name="Caglayan A.O."/>
            <person name="Al-Sanaa N."/>
            <person name="Al-Abdulwahed H.Y."/>
            <person name="Kaymakcalan H."/>
            <person name="Yilmaz C."/>
            <person name="Zaki M.S."/>
            <person name="Rosti R.O."/>
            <person name="Copeland B."/>
            <person name="Baek S.T."/>
            <person name="Musaev D."/>
            <person name="Scott E.C."/>
            <person name="Ben-Omran T."/>
            <person name="Kariminejad A."/>
            <person name="Kayserili H."/>
            <person name="Mojahedi F."/>
            <person name="Kara M."/>
            <person name="Cai N."/>
            <person name="Silhavy J.L."/>
            <person name="Elsharif S."/>
            <person name="Fenercioglu E."/>
            <person name="Barshop B.A."/>
            <person name="Kara B."/>
            <person name="Wang R."/>
            <person name="Stanley V."/>
            <person name="James K.N."/>
            <person name="Nachnani R."/>
            <person name="Kalur A."/>
            <person name="Megahed H."/>
            <person name="Incecik F."/>
            <person name="Danda S."/>
            <person name="Alanay Y."/>
            <person name="Faqeih E."/>
            <person name="Melikishvili G."/>
            <person name="Mansour L."/>
            <person name="Miller I."/>
            <person name="Sukhudyan B."/>
            <person name="Chelly J."/>
            <person name="Dobyns W.B."/>
            <person name="Bilguvar K."/>
            <person name="Jamra R.A."/>
            <person name="Gunel M."/>
            <person name="Gleeson J.G."/>
        </authorList>
    </citation>
    <scope>FUNCTION</scope>
    <scope>INTERACTION WITH F-ACTIN</scope>
    <scope>TISSUE SPECIFICITY</scope>
    <scope>INVOLVEMENT IN CDCBM9</scope>
    <scope>VARIANTS CDCBM9 494-ARG--PHE-953 DEL; 781-ARG--PHE-953 DEL AND 930-ARG--PHE-953 DEL</scope>
    <scope>CHARACTERIZATION OF VARIANT CDCBM9 781-ARG--PHE-953 DEL</scope>
</reference>
<gene>
    <name type="primary">CTNNA2</name>
    <name type="synonym">CAPR</name>
</gene>
<keyword id="KW-0002">3D-structure</keyword>
<keyword id="KW-0025">Alternative splicing</keyword>
<keyword id="KW-0130">Cell adhesion</keyword>
<keyword id="KW-0965">Cell junction</keyword>
<keyword id="KW-1003">Cell membrane</keyword>
<keyword id="KW-0966">Cell projection</keyword>
<keyword id="KW-0963">Cytoplasm</keyword>
<keyword id="KW-0206">Cytoskeleton</keyword>
<keyword id="KW-0217">Developmental protein</keyword>
<keyword id="KW-0221">Differentiation</keyword>
<keyword id="KW-0225">Disease variant</keyword>
<keyword id="KW-0451">Lissencephaly</keyword>
<keyword id="KW-0472">Membrane</keyword>
<keyword id="KW-0539">Nucleus</keyword>
<keyword id="KW-0597">Phosphoprotein</keyword>
<keyword id="KW-1267">Proteomics identification</keyword>
<keyword id="KW-1185">Reference proteome</keyword>
<feature type="chain" id="PRO_0000064263" description="Catenin alpha-2">
    <location>
        <begin position="1"/>
        <end position="953"/>
    </location>
</feature>
<feature type="region of interest" description="Disordered" evidence="3">
    <location>
        <begin position="912"/>
        <end position="939"/>
    </location>
</feature>
<feature type="compositionally biased region" description="Basic and acidic residues" evidence="3">
    <location>
        <begin position="912"/>
        <end position="927"/>
    </location>
</feature>
<feature type="compositionally biased region" description="Basic residues" evidence="3">
    <location>
        <begin position="928"/>
        <end position="938"/>
    </location>
</feature>
<feature type="modified residue" description="Phosphothreonine" evidence="2">
    <location>
        <position position="632"/>
    </location>
</feature>
<feature type="modified residue" description="Phosphoserine" evidence="10">
    <location>
        <position position="640"/>
    </location>
</feature>
<feature type="modified residue" description="Phosphoserine" evidence="2">
    <location>
        <position position="651"/>
    </location>
</feature>
<feature type="modified residue" description="Phosphoserine" evidence="2">
    <location>
        <position position="901"/>
    </location>
</feature>
<feature type="modified residue" description="Phosphoserine" evidence="2">
    <location>
        <position position="939"/>
    </location>
</feature>
<feature type="splice variant" id="VSP_038008" description="In isoform 4." evidence="6">
    <location>
        <begin position="1"/>
        <end position="368"/>
    </location>
</feature>
<feature type="splice variant" id="VSP_038005" description="In isoform 6." evidence="8">
    <location>
        <begin position="1"/>
        <end position="351"/>
    </location>
</feature>
<feature type="splice variant" id="VSP_038007" description="In isoform 5." evidence="6">
    <original>M</original>
    <variation>MSGLICLQYGLWHGQKIDFGGPRRLLQRNRGEGSM</variation>
    <location>
        <position position="1"/>
    </location>
</feature>
<feature type="splice variant" id="VSP_038006" description="In isoform 6." evidence="8">
    <original>N</original>
    <variation>MDGWRRPLQSVGKVCEKNMKTSEMHTMSGAQ</variation>
    <location>
        <position position="352"/>
    </location>
</feature>
<feature type="splice variant" id="VSP_038009" description="In isoform 3." evidence="6">
    <location>
        <begin position="766"/>
        <end position="858"/>
    </location>
</feature>
<feature type="splice variant" id="VSP_020337" description="In isoform 2, isoform 4, isoform 5 and isoform 6." evidence="6 7 8">
    <location>
        <begin position="811"/>
        <end position="858"/>
    </location>
</feature>
<feature type="sequence variant" id="VAR_081335" description="In CDCBM9." evidence="5">
    <location>
        <begin position="494"/>
        <end position="953"/>
    </location>
</feature>
<feature type="sequence variant" id="VAR_081336" description="In CDCBM9; loss-of-function variant resulting in decreased neurite length and impaired neuronal migration in patient-derived nerve cells; no protein detected in patient cells." evidence="5">
    <location>
        <begin position="781"/>
        <end position="953"/>
    </location>
</feature>
<feature type="sequence variant" id="VAR_081337" description="In CDCBM9; uncertain significance." evidence="5">
    <location>
        <begin position="930"/>
        <end position="953"/>
    </location>
</feature>
<feature type="sequence conflict" description="In Ref. 3; BAH12003." evidence="9" ref="3">
    <original>T</original>
    <variation>A</variation>
    <location>
        <position position="122"/>
    </location>
</feature>
<feature type="sequence conflict" description="In Ref. 1; AAA58407." evidence="9" ref="1">
    <original>E</original>
    <variation>K</variation>
    <location>
        <position position="182"/>
    </location>
</feature>
<feature type="sequence conflict" description="In Ref. 5; AAY15008." evidence="9" ref="5">
    <original>S</original>
    <variation>SS</variation>
    <location>
        <position position="309"/>
    </location>
</feature>
<feature type="sequence conflict" description="In Ref. 1; AAA58407." evidence="9" ref="1">
    <original>SR</original>
    <variation>RG</variation>
    <location>
        <begin position="651"/>
        <end position="652"/>
    </location>
</feature>
<feature type="helix" evidence="11">
    <location>
        <begin position="677"/>
        <end position="702"/>
    </location>
</feature>
<feature type="helix" evidence="11">
    <location>
        <begin position="710"/>
        <end position="729"/>
    </location>
</feature>
<feature type="helix" evidence="11">
    <location>
        <begin position="738"/>
        <end position="765"/>
    </location>
</feature>
<feature type="helix" evidence="11">
    <location>
        <begin position="769"/>
        <end position="792"/>
    </location>
</feature>
<feature type="strand" evidence="11">
    <location>
        <begin position="798"/>
        <end position="802"/>
    </location>
</feature>
<feature type="strand" evidence="11">
    <location>
        <begin position="805"/>
        <end position="809"/>
    </location>
</feature>
<feature type="helix" evidence="11">
    <location>
        <begin position="861"/>
        <end position="894"/>
    </location>
</feature>
<name>CTNA2_HUMAN</name>
<proteinExistence type="evidence at protein level"/>